<reference key="1">
    <citation type="journal article" date="2001" name="Mol. Gen. Genet.">
        <title>Comparison of psbK operon organization and group III intron content in chloroplast genomes of 12 Euglenoid species.</title>
        <authorList>
            <person name="Doetsch N.A."/>
            <person name="Thompson M.D."/>
            <person name="Favreau M.R."/>
            <person name="Hallick R.B."/>
        </authorList>
    </citation>
    <scope>NUCLEOTIDE SEQUENCE [GENOMIC DNA]</scope>
</reference>
<protein>
    <recommendedName>
        <fullName evidence="1">Photosystem II reaction center protein Psb30</fullName>
    </recommendedName>
    <alternativeName>
        <fullName evidence="1">Photosystem II reaction center protein Ycf12</fullName>
    </alternativeName>
</protein>
<keyword id="KW-0150">Chloroplast</keyword>
<keyword id="KW-0472">Membrane</keyword>
<keyword id="KW-0602">Photosynthesis</keyword>
<keyword id="KW-0604">Photosystem II</keyword>
<keyword id="KW-0934">Plastid</keyword>
<keyword id="KW-0793">Thylakoid</keyword>
<keyword id="KW-0812">Transmembrane</keyword>
<keyword id="KW-1133">Transmembrane helix</keyword>
<feature type="chain" id="PRO_0000059030" description="Photosystem II reaction center protein Psb30">
    <location>
        <begin position="1"/>
        <end position="33"/>
    </location>
</feature>
<feature type="transmembrane region" description="Helical" evidence="1">
    <location>
        <begin position="5"/>
        <end position="25"/>
    </location>
</feature>
<comment type="function">
    <text evidence="1">A core subunit of photosystem II (PSII), probably helps stabilize the reaction center.</text>
</comment>
<comment type="subunit">
    <text evidence="1">PSII is composed of 1 copy each of membrane proteins PsbA, PsbB, PsbC, PsbD, PsbE, PsbF, PsbH, PsbI, PsbJ, PsbK, PsbL, PsbM, PsbT, PsbX, PsbY, PsbZ, Psb30/Ycf12, peripheral proteins of the oxygen-evolving complex and a large number of cofactors. It forms dimeric complexes.</text>
</comment>
<comment type="subcellular location">
    <subcellularLocation>
        <location evidence="1">Plastid</location>
        <location evidence="1">Chloroplast thylakoid membrane</location>
        <topology evidence="1">Single-pass membrane protein</topology>
    </subcellularLocation>
</comment>
<comment type="similarity">
    <text evidence="1">Belongs to the Psb30/Ycf12 family.</text>
</comment>
<geneLocation type="chloroplast"/>
<accession>Q9MS72</accession>
<gene>
    <name evidence="1" type="primary">psb30</name>
    <name evidence="1" type="synonym">ycf12</name>
</gene>
<proteinExistence type="inferred from homology"/>
<organism>
    <name type="scientific">Lepocinclis buetschlii</name>
    <dbReference type="NCBI Taxonomy" id="66847"/>
    <lineage>
        <taxon>Eukaryota</taxon>
        <taxon>Discoba</taxon>
        <taxon>Euglenozoa</taxon>
        <taxon>Euglenida</taxon>
        <taxon>Spirocuta</taxon>
        <taxon>Euglenophyceae</taxon>
        <taxon>Euglenales</taxon>
        <taxon>Phacaceae</taxon>
        <taxon>Lepocinclis</taxon>
    </lineage>
</organism>
<name>PSB30_LEPBU</name>
<sequence length="33" mass="3446">MNIELITQLASLILIVASGPIVIGLLSLKQGNL</sequence>
<dbReference type="EMBL" id="AF241278">
    <property type="protein sequence ID" value="AAF82446.1"/>
    <property type="molecule type" value="Genomic_DNA"/>
</dbReference>
<dbReference type="SMR" id="Q9MS72"/>
<dbReference type="GO" id="GO:0009535">
    <property type="term" value="C:chloroplast thylakoid membrane"/>
    <property type="evidence" value="ECO:0007669"/>
    <property type="project" value="UniProtKB-SubCell"/>
</dbReference>
<dbReference type="GO" id="GO:0009523">
    <property type="term" value="C:photosystem II"/>
    <property type="evidence" value="ECO:0007669"/>
    <property type="project" value="UniProtKB-KW"/>
</dbReference>
<dbReference type="GO" id="GO:0015979">
    <property type="term" value="P:photosynthesis"/>
    <property type="evidence" value="ECO:0007669"/>
    <property type="project" value="UniProtKB-KW"/>
</dbReference>
<dbReference type="HAMAP" id="MF_01329">
    <property type="entry name" value="PSII_Psb30_Ycf12"/>
    <property type="match status" value="1"/>
</dbReference>
<dbReference type="InterPro" id="IPR010284">
    <property type="entry name" value="PSII_Ycf12_core-subunit"/>
</dbReference>
<dbReference type="NCBIfam" id="NF010239">
    <property type="entry name" value="PRK13686.1"/>
    <property type="match status" value="1"/>
</dbReference>
<dbReference type="Pfam" id="PF05969">
    <property type="entry name" value="PSII_Ycf12"/>
    <property type="match status" value="1"/>
</dbReference>
<evidence type="ECO:0000255" key="1">
    <source>
        <dbReference type="HAMAP-Rule" id="MF_01329"/>
    </source>
</evidence>